<organism>
    <name type="scientific">Cupriavidus taiwanensis (strain DSM 17343 / BCRC 17206 / CCUG 44338 / CIP 107171 / LMG 19424 / R1)</name>
    <name type="common">Ralstonia taiwanensis (strain LMG 19424)</name>
    <dbReference type="NCBI Taxonomy" id="977880"/>
    <lineage>
        <taxon>Bacteria</taxon>
        <taxon>Pseudomonadati</taxon>
        <taxon>Pseudomonadota</taxon>
        <taxon>Betaproteobacteria</taxon>
        <taxon>Burkholderiales</taxon>
        <taxon>Burkholderiaceae</taxon>
        <taxon>Cupriavidus</taxon>
    </lineage>
</organism>
<sequence length="228" mass="23853">MTQDELKALVAQAAADYVKQEVPEGAVLGVGTGSTANLFIDAVAAFKDRFAGAVSSSEASTRRLQQHGFKVLDLNEVDEIPVYVDGADEIDASGAMVKGGGGALTREKIVASVARRFVCIADGSKLVQTMGAFPLPVEVVPMARAAVARKLQALGGQPRLRMTKEGGIYKTDNGNVILDVAGLKIDDPRGLEQTINQVPGVVTVGLFALRGADVLLLGTGDGVQRTDY</sequence>
<dbReference type="EC" id="5.3.1.6" evidence="1"/>
<dbReference type="EMBL" id="CU633749">
    <property type="protein sequence ID" value="CAQ69831.1"/>
    <property type="molecule type" value="Genomic_DNA"/>
</dbReference>
<dbReference type="RefSeq" id="WP_012353146.1">
    <property type="nucleotide sequence ID" value="NC_010528.1"/>
</dbReference>
<dbReference type="SMR" id="B3R1I3"/>
<dbReference type="GeneID" id="29763339"/>
<dbReference type="KEGG" id="cti:RALTA_A1890"/>
<dbReference type="eggNOG" id="COG0120">
    <property type="taxonomic scope" value="Bacteria"/>
</dbReference>
<dbReference type="HOGENOM" id="CLU_056590_1_1_4"/>
<dbReference type="BioCyc" id="CTAI977880:RALTA_RS09110-MONOMER"/>
<dbReference type="UniPathway" id="UPA00115">
    <property type="reaction ID" value="UER00412"/>
</dbReference>
<dbReference type="Proteomes" id="UP000001692">
    <property type="component" value="Chromosome 1"/>
</dbReference>
<dbReference type="GO" id="GO:0005829">
    <property type="term" value="C:cytosol"/>
    <property type="evidence" value="ECO:0007669"/>
    <property type="project" value="TreeGrafter"/>
</dbReference>
<dbReference type="GO" id="GO:0004751">
    <property type="term" value="F:ribose-5-phosphate isomerase activity"/>
    <property type="evidence" value="ECO:0007669"/>
    <property type="project" value="UniProtKB-UniRule"/>
</dbReference>
<dbReference type="GO" id="GO:0006014">
    <property type="term" value="P:D-ribose metabolic process"/>
    <property type="evidence" value="ECO:0007669"/>
    <property type="project" value="TreeGrafter"/>
</dbReference>
<dbReference type="GO" id="GO:0009052">
    <property type="term" value="P:pentose-phosphate shunt, non-oxidative branch"/>
    <property type="evidence" value="ECO:0007669"/>
    <property type="project" value="UniProtKB-UniRule"/>
</dbReference>
<dbReference type="CDD" id="cd01398">
    <property type="entry name" value="RPI_A"/>
    <property type="match status" value="1"/>
</dbReference>
<dbReference type="FunFam" id="3.40.50.1360:FF:000001">
    <property type="entry name" value="Ribose-5-phosphate isomerase A"/>
    <property type="match status" value="1"/>
</dbReference>
<dbReference type="Gene3D" id="3.30.70.260">
    <property type="match status" value="1"/>
</dbReference>
<dbReference type="Gene3D" id="3.40.50.1360">
    <property type="match status" value="1"/>
</dbReference>
<dbReference type="HAMAP" id="MF_00170">
    <property type="entry name" value="Rib_5P_isom_A"/>
    <property type="match status" value="1"/>
</dbReference>
<dbReference type="InterPro" id="IPR037171">
    <property type="entry name" value="NagB/RpiA_transferase-like"/>
</dbReference>
<dbReference type="InterPro" id="IPR020672">
    <property type="entry name" value="Ribose5P_isomerase_typA_subgr"/>
</dbReference>
<dbReference type="InterPro" id="IPR004788">
    <property type="entry name" value="Ribose5P_isomerase_type_A"/>
</dbReference>
<dbReference type="NCBIfam" id="NF001924">
    <property type="entry name" value="PRK00702.1"/>
    <property type="match status" value="1"/>
</dbReference>
<dbReference type="NCBIfam" id="TIGR00021">
    <property type="entry name" value="rpiA"/>
    <property type="match status" value="1"/>
</dbReference>
<dbReference type="PANTHER" id="PTHR11934">
    <property type="entry name" value="RIBOSE-5-PHOSPHATE ISOMERASE"/>
    <property type="match status" value="1"/>
</dbReference>
<dbReference type="PANTHER" id="PTHR11934:SF0">
    <property type="entry name" value="RIBOSE-5-PHOSPHATE ISOMERASE"/>
    <property type="match status" value="1"/>
</dbReference>
<dbReference type="Pfam" id="PF06026">
    <property type="entry name" value="Rib_5-P_isom_A"/>
    <property type="match status" value="1"/>
</dbReference>
<dbReference type="SUPFAM" id="SSF75445">
    <property type="entry name" value="D-ribose-5-phosphate isomerase (RpiA), lid domain"/>
    <property type="match status" value="1"/>
</dbReference>
<dbReference type="SUPFAM" id="SSF100950">
    <property type="entry name" value="NagB/RpiA/CoA transferase-like"/>
    <property type="match status" value="1"/>
</dbReference>
<proteinExistence type="inferred from homology"/>
<feature type="chain" id="PRO_1000097659" description="Ribose-5-phosphate isomerase A">
    <location>
        <begin position="1"/>
        <end position="228"/>
    </location>
</feature>
<feature type="active site" description="Proton acceptor" evidence="1">
    <location>
        <position position="107"/>
    </location>
</feature>
<feature type="binding site" evidence="1">
    <location>
        <begin position="32"/>
        <end position="35"/>
    </location>
    <ligand>
        <name>substrate</name>
    </ligand>
</feature>
<feature type="binding site" evidence="1">
    <location>
        <begin position="85"/>
        <end position="88"/>
    </location>
    <ligand>
        <name>substrate</name>
    </ligand>
</feature>
<feature type="binding site" evidence="1">
    <location>
        <begin position="98"/>
        <end position="101"/>
    </location>
    <ligand>
        <name>substrate</name>
    </ligand>
</feature>
<feature type="binding site" evidence="1">
    <location>
        <position position="125"/>
    </location>
    <ligand>
        <name>substrate</name>
    </ligand>
</feature>
<gene>
    <name evidence="1" type="primary">rpiA</name>
    <name type="ordered locus">RALTA_A1890</name>
</gene>
<reference key="1">
    <citation type="journal article" date="2008" name="Genome Res.">
        <title>Genome sequence of the beta-rhizobium Cupriavidus taiwanensis and comparative genomics of rhizobia.</title>
        <authorList>
            <person name="Amadou C."/>
            <person name="Pascal G."/>
            <person name="Mangenot S."/>
            <person name="Glew M."/>
            <person name="Bontemps C."/>
            <person name="Capela D."/>
            <person name="Carrere S."/>
            <person name="Cruveiller S."/>
            <person name="Dossat C."/>
            <person name="Lajus A."/>
            <person name="Marchetti M."/>
            <person name="Poinsot V."/>
            <person name="Rouy Z."/>
            <person name="Servin B."/>
            <person name="Saad M."/>
            <person name="Schenowitz C."/>
            <person name="Barbe V."/>
            <person name="Batut J."/>
            <person name="Medigue C."/>
            <person name="Masson-Boivin C."/>
        </authorList>
    </citation>
    <scope>NUCLEOTIDE SEQUENCE [LARGE SCALE GENOMIC DNA]</scope>
    <source>
        <strain>DSM 17343 / BCRC 17206 / CCUG 44338 / CIP 107171 / LMG 19424 / R1</strain>
    </source>
</reference>
<accession>B3R1I3</accession>
<evidence type="ECO:0000255" key="1">
    <source>
        <dbReference type="HAMAP-Rule" id="MF_00170"/>
    </source>
</evidence>
<keyword id="KW-0413">Isomerase</keyword>
<comment type="function">
    <text evidence="1">Catalyzes the reversible conversion of ribose-5-phosphate to ribulose 5-phosphate.</text>
</comment>
<comment type="catalytic activity">
    <reaction evidence="1">
        <text>aldehydo-D-ribose 5-phosphate = D-ribulose 5-phosphate</text>
        <dbReference type="Rhea" id="RHEA:14657"/>
        <dbReference type="ChEBI" id="CHEBI:58121"/>
        <dbReference type="ChEBI" id="CHEBI:58273"/>
        <dbReference type="EC" id="5.3.1.6"/>
    </reaction>
</comment>
<comment type="pathway">
    <text evidence="1">Carbohydrate degradation; pentose phosphate pathway; D-ribose 5-phosphate from D-ribulose 5-phosphate (non-oxidative stage): step 1/1.</text>
</comment>
<comment type="subunit">
    <text evidence="1">Homodimer.</text>
</comment>
<comment type="similarity">
    <text evidence="1">Belongs to the ribose 5-phosphate isomerase family.</text>
</comment>
<name>RPIA_CUPTR</name>
<protein>
    <recommendedName>
        <fullName evidence="1">Ribose-5-phosphate isomerase A</fullName>
        <ecNumber evidence="1">5.3.1.6</ecNumber>
    </recommendedName>
    <alternativeName>
        <fullName evidence="1">Phosphoriboisomerase A</fullName>
        <shortName evidence="1">PRI</shortName>
    </alternativeName>
</protein>